<keyword id="KW-0472">Membrane</keyword>
<keyword id="KW-1185">Reference proteome</keyword>
<keyword id="KW-0812">Transmembrane</keyword>
<keyword id="KW-1133">Transmembrane helix</keyword>
<keyword id="KW-0813">Transport</keyword>
<protein>
    <recommendedName>
        <fullName>Myo-inositol transporter 2</fullName>
    </recommendedName>
</protein>
<feature type="chain" id="PRO_0000050454" description="Myo-inositol transporter 2">
    <location>
        <begin position="1"/>
        <end position="557"/>
    </location>
</feature>
<feature type="topological domain" description="Cytoplasmic" evidence="1">
    <location>
        <begin position="1"/>
        <end position="76"/>
    </location>
</feature>
<feature type="transmembrane region" description="Helical; Name=1" evidence="1">
    <location>
        <begin position="77"/>
        <end position="97"/>
    </location>
</feature>
<feature type="topological domain" description="Extracellular" evidence="1">
    <location>
        <begin position="98"/>
        <end position="99"/>
    </location>
</feature>
<feature type="transmembrane region" description="Helical; Name=2" evidence="1">
    <location>
        <begin position="100"/>
        <end position="120"/>
    </location>
</feature>
<feature type="topological domain" description="Cytoplasmic" evidence="1">
    <location>
        <begin position="121"/>
        <end position="123"/>
    </location>
</feature>
<feature type="transmembrane region" description="Helical; Name=3" evidence="1">
    <location>
        <begin position="124"/>
        <end position="144"/>
    </location>
</feature>
<feature type="topological domain" description="Extracellular" evidence="1">
    <location>
        <begin position="145"/>
        <end position="157"/>
    </location>
</feature>
<feature type="transmembrane region" description="Helical; Name=4" evidence="1">
    <location>
        <begin position="158"/>
        <end position="178"/>
    </location>
</feature>
<feature type="topological domain" description="Cytoplasmic" evidence="1">
    <location>
        <begin position="179"/>
        <end position="180"/>
    </location>
</feature>
<feature type="transmembrane region" description="Helical; Name=5" evidence="1">
    <location>
        <begin position="181"/>
        <end position="201"/>
    </location>
</feature>
<feature type="topological domain" description="Extracellular" evidence="1">
    <location>
        <begin position="202"/>
        <end position="209"/>
    </location>
</feature>
<feature type="transmembrane region" description="Helical; Name=6" evidence="1">
    <location>
        <begin position="210"/>
        <end position="230"/>
    </location>
</feature>
<feature type="topological domain" description="Cytoplasmic" evidence="1">
    <location>
        <begin position="231"/>
        <end position="240"/>
    </location>
</feature>
<feature type="transmembrane region" description="Helical; Name=7" evidence="1">
    <location>
        <begin position="241"/>
        <end position="261"/>
    </location>
</feature>
<feature type="topological domain" description="Extracellular" evidence="1">
    <location>
        <begin position="262"/>
        <end position="367"/>
    </location>
</feature>
<feature type="transmembrane region" description="Helical; Name=8" evidence="1">
    <location>
        <begin position="368"/>
        <end position="388"/>
    </location>
</feature>
<feature type="topological domain" description="Cytoplasmic" evidence="1">
    <location>
        <begin position="389"/>
        <end position="396"/>
    </location>
</feature>
<feature type="transmembrane region" description="Helical; Name=9" evidence="1">
    <location>
        <begin position="397"/>
        <end position="417"/>
    </location>
</feature>
<feature type="topological domain" description="Extracellular" evidence="1">
    <location>
        <begin position="418"/>
        <end position="432"/>
    </location>
</feature>
<feature type="transmembrane region" description="Helical; Name=10" evidence="1">
    <location>
        <begin position="433"/>
        <end position="453"/>
    </location>
</feature>
<feature type="topological domain" description="Cytoplasmic" evidence="1">
    <location>
        <begin position="454"/>
        <end position="468"/>
    </location>
</feature>
<feature type="transmembrane region" description="Helical; Name=11" evidence="1">
    <location>
        <begin position="469"/>
        <end position="489"/>
    </location>
</feature>
<feature type="topological domain" description="Extracellular" evidence="1">
    <location>
        <begin position="490"/>
        <end position="498"/>
    </location>
</feature>
<feature type="transmembrane region" description="Helical; Name=12" evidence="1">
    <location>
        <begin position="499"/>
        <end position="519"/>
    </location>
</feature>
<feature type="topological domain" description="Cytoplasmic" evidence="1">
    <location>
        <begin position="520"/>
        <end position="557"/>
    </location>
</feature>
<feature type="region of interest" description="Disordered" evidence="2">
    <location>
        <begin position="24"/>
        <end position="69"/>
    </location>
</feature>
<feature type="compositionally biased region" description="Basic and acidic residues" evidence="2">
    <location>
        <begin position="30"/>
        <end position="44"/>
    </location>
</feature>
<feature type="sequence conflict" description="In Ref. 3; BAA13913." evidence="4" ref="3">
    <original>N</original>
    <variation>H</variation>
    <location>
        <position position="271"/>
    </location>
</feature>
<feature type="sequence conflict" description="In Ref. 3; BAA13913." evidence="4" ref="3">
    <original>I</original>
    <variation>M</variation>
    <location>
        <position position="372"/>
    </location>
</feature>
<feature type="sequence conflict" description="In Ref. 3; BAA13913." evidence="4" ref="3">
    <original>N</original>
    <variation>H</variation>
    <location>
        <position position="428"/>
    </location>
</feature>
<feature type="sequence conflict" description="In Ref. 3; BAA13913." evidence="4" ref="3">
    <original>L</original>
    <variation>I</variation>
    <location>
        <position position="436"/>
    </location>
</feature>
<feature type="sequence conflict" description="In Ref. 3; BAA13913." evidence="4" ref="3">
    <original>S</original>
    <variation>F</variation>
    <location>
        <position position="526"/>
    </location>
</feature>
<reference key="1">
    <citation type="journal article" date="1998" name="Curr. Genet.">
        <title>Exogenous inositol and genes responsible for inositol transport are required for mating and sporulation in Shizosaccharomyces pombe.</title>
        <authorList>
            <person name="Niederberger C."/>
            <person name="Graub R."/>
            <person name="Schweingruber A.-M."/>
            <person name="Fankhauser H."/>
            <person name="Rusu M."/>
            <person name="Poitelea M."/>
            <person name="Edenharter L."/>
            <person name="Schweingruber M.E."/>
        </authorList>
    </citation>
    <scope>NUCLEOTIDE SEQUENCE [GENOMIC DNA]</scope>
    <scope>FUNCTION</scope>
    <source>
        <strain>ATCC 38364 / 968</strain>
    </source>
</reference>
<reference key="2">
    <citation type="journal article" date="2002" name="Nature">
        <title>The genome sequence of Schizosaccharomyces pombe.</title>
        <authorList>
            <person name="Wood V."/>
            <person name="Gwilliam R."/>
            <person name="Rajandream M.A."/>
            <person name="Lyne M.H."/>
            <person name="Lyne R."/>
            <person name="Stewart A."/>
            <person name="Sgouros J.G."/>
            <person name="Peat N."/>
            <person name="Hayles J."/>
            <person name="Baker S.G."/>
            <person name="Basham D."/>
            <person name="Bowman S."/>
            <person name="Brooks K."/>
            <person name="Brown D."/>
            <person name="Brown S."/>
            <person name="Chillingworth T."/>
            <person name="Churcher C.M."/>
            <person name="Collins M."/>
            <person name="Connor R."/>
            <person name="Cronin A."/>
            <person name="Davis P."/>
            <person name="Feltwell T."/>
            <person name="Fraser A."/>
            <person name="Gentles S."/>
            <person name="Goble A."/>
            <person name="Hamlin N."/>
            <person name="Harris D.E."/>
            <person name="Hidalgo J."/>
            <person name="Hodgson G."/>
            <person name="Holroyd S."/>
            <person name="Hornsby T."/>
            <person name="Howarth S."/>
            <person name="Huckle E.J."/>
            <person name="Hunt S."/>
            <person name="Jagels K."/>
            <person name="James K.D."/>
            <person name="Jones L."/>
            <person name="Jones M."/>
            <person name="Leather S."/>
            <person name="McDonald S."/>
            <person name="McLean J."/>
            <person name="Mooney P."/>
            <person name="Moule S."/>
            <person name="Mungall K.L."/>
            <person name="Murphy L.D."/>
            <person name="Niblett D."/>
            <person name="Odell C."/>
            <person name="Oliver K."/>
            <person name="O'Neil S."/>
            <person name="Pearson D."/>
            <person name="Quail M.A."/>
            <person name="Rabbinowitsch E."/>
            <person name="Rutherford K.M."/>
            <person name="Rutter S."/>
            <person name="Saunders D."/>
            <person name="Seeger K."/>
            <person name="Sharp S."/>
            <person name="Skelton J."/>
            <person name="Simmonds M.N."/>
            <person name="Squares R."/>
            <person name="Squares S."/>
            <person name="Stevens K."/>
            <person name="Taylor K."/>
            <person name="Taylor R.G."/>
            <person name="Tivey A."/>
            <person name="Walsh S.V."/>
            <person name="Warren T."/>
            <person name="Whitehead S."/>
            <person name="Woodward J.R."/>
            <person name="Volckaert G."/>
            <person name="Aert R."/>
            <person name="Robben J."/>
            <person name="Grymonprez B."/>
            <person name="Weltjens I."/>
            <person name="Vanstreels E."/>
            <person name="Rieger M."/>
            <person name="Schaefer M."/>
            <person name="Mueller-Auer S."/>
            <person name="Gabel C."/>
            <person name="Fuchs M."/>
            <person name="Duesterhoeft A."/>
            <person name="Fritzc C."/>
            <person name="Holzer E."/>
            <person name="Moestl D."/>
            <person name="Hilbert H."/>
            <person name="Borzym K."/>
            <person name="Langer I."/>
            <person name="Beck A."/>
            <person name="Lehrach H."/>
            <person name="Reinhardt R."/>
            <person name="Pohl T.M."/>
            <person name="Eger P."/>
            <person name="Zimmermann W."/>
            <person name="Wedler H."/>
            <person name="Wambutt R."/>
            <person name="Purnelle B."/>
            <person name="Goffeau A."/>
            <person name="Cadieu E."/>
            <person name="Dreano S."/>
            <person name="Gloux S."/>
            <person name="Lelaure V."/>
            <person name="Mottier S."/>
            <person name="Galibert F."/>
            <person name="Aves S.J."/>
            <person name="Xiang Z."/>
            <person name="Hunt C."/>
            <person name="Moore K."/>
            <person name="Hurst S.M."/>
            <person name="Lucas M."/>
            <person name="Rochet M."/>
            <person name="Gaillardin C."/>
            <person name="Tallada V.A."/>
            <person name="Garzon A."/>
            <person name="Thode G."/>
            <person name="Daga R.R."/>
            <person name="Cruzado L."/>
            <person name="Jimenez J."/>
            <person name="Sanchez M."/>
            <person name="del Rey F."/>
            <person name="Benito J."/>
            <person name="Dominguez A."/>
            <person name="Revuelta J.L."/>
            <person name="Moreno S."/>
            <person name="Armstrong J."/>
            <person name="Forsburg S.L."/>
            <person name="Cerutti L."/>
            <person name="Lowe T."/>
            <person name="McCombie W.R."/>
            <person name="Paulsen I."/>
            <person name="Potashkin J."/>
            <person name="Shpakovski G.V."/>
            <person name="Ussery D."/>
            <person name="Barrell B.G."/>
            <person name="Nurse P."/>
        </authorList>
    </citation>
    <scope>NUCLEOTIDE SEQUENCE [LARGE SCALE GENOMIC DNA]</scope>
    <source>
        <strain>972 / ATCC 24843</strain>
    </source>
</reference>
<reference key="3">
    <citation type="journal article" date="1997" name="DNA Res.">
        <title>Identification of open reading frames in Schizosaccharomyces pombe cDNAs.</title>
        <authorList>
            <person name="Yoshioka S."/>
            <person name="Kato K."/>
            <person name="Nakai K."/>
            <person name="Okayama H."/>
            <person name="Nojima H."/>
        </authorList>
    </citation>
    <scope>NUCLEOTIDE SEQUENCE [LARGE SCALE MRNA] OF 166-541</scope>
    <source>
        <strain>PR745</strain>
    </source>
</reference>
<evidence type="ECO:0000255" key="1"/>
<evidence type="ECO:0000256" key="2">
    <source>
        <dbReference type="SAM" id="MobiDB-lite"/>
    </source>
</evidence>
<evidence type="ECO:0000269" key="3">
    <source>
    </source>
</evidence>
<evidence type="ECO:0000305" key="4"/>
<evidence type="ECO:0000305" key="5">
    <source>
    </source>
</evidence>
<organism>
    <name type="scientific">Schizosaccharomyces pombe (strain 972 / ATCC 24843)</name>
    <name type="common">Fission yeast</name>
    <dbReference type="NCBI Taxonomy" id="284812"/>
    <lineage>
        <taxon>Eukaryota</taxon>
        <taxon>Fungi</taxon>
        <taxon>Dikarya</taxon>
        <taxon>Ascomycota</taxon>
        <taxon>Taphrinomycotina</taxon>
        <taxon>Schizosaccharomycetes</taxon>
        <taxon>Schizosaccharomycetales</taxon>
        <taxon>Schizosaccharomycetaceae</taxon>
        <taxon>Schizosaccharomyces</taxon>
    </lineage>
</organism>
<comment type="function">
    <text evidence="3">Transporter for myo-inositol.</text>
</comment>
<comment type="catalytic activity">
    <reaction evidence="5">
        <text>myo-inositol(out) + H(+)(out) = myo-inositol(in) + H(+)(in)</text>
        <dbReference type="Rhea" id="RHEA:60364"/>
        <dbReference type="ChEBI" id="CHEBI:15378"/>
        <dbReference type="ChEBI" id="CHEBI:17268"/>
    </reaction>
</comment>
<comment type="subcellular location">
    <subcellularLocation>
        <location>Membrane</location>
        <topology>Multi-pass membrane protein</topology>
    </subcellularLocation>
</comment>
<comment type="similarity">
    <text evidence="4">Belongs to the major facilitator superfamily. Sugar transporter (TC 2.A.1.1) family.</text>
</comment>
<gene>
    <name type="primary">itr2</name>
    <name type="ORF">SPAC20G8.03</name>
</gene>
<dbReference type="EMBL" id="X99105">
    <property type="status" value="NOT_ANNOTATED_CDS"/>
    <property type="molecule type" value="Genomic_DNA"/>
</dbReference>
<dbReference type="EMBL" id="CU329670">
    <property type="protein sequence ID" value="CAB08597.1"/>
    <property type="molecule type" value="Genomic_DNA"/>
</dbReference>
<dbReference type="EMBL" id="D89252">
    <property type="protein sequence ID" value="BAA13913.1"/>
    <property type="molecule type" value="mRNA"/>
</dbReference>
<dbReference type="PIR" id="T38125">
    <property type="entry name" value="T38125"/>
</dbReference>
<dbReference type="PIR" id="T43176">
    <property type="entry name" value="T43176"/>
</dbReference>
<dbReference type="RefSeq" id="NP_593320.1">
    <property type="nucleotide sequence ID" value="NM_001018751.2"/>
</dbReference>
<dbReference type="SMR" id="P87110"/>
<dbReference type="BioGRID" id="278318">
    <property type="interactions" value="3"/>
</dbReference>
<dbReference type="FunCoup" id="P87110">
    <property type="interactions" value="171"/>
</dbReference>
<dbReference type="STRING" id="284812.P87110"/>
<dbReference type="iPTMnet" id="P87110"/>
<dbReference type="PaxDb" id="4896-SPAC20G8.03.1"/>
<dbReference type="EnsemblFungi" id="SPAC20G8.03.1">
    <property type="protein sequence ID" value="SPAC20G8.03.1:pep"/>
    <property type="gene ID" value="SPAC20G8.03"/>
</dbReference>
<dbReference type="GeneID" id="2541827"/>
<dbReference type="KEGG" id="spo:2541827"/>
<dbReference type="PomBase" id="SPAC20G8.03">
    <property type="gene designation" value="itr2"/>
</dbReference>
<dbReference type="VEuPathDB" id="FungiDB:SPAC20G8.03"/>
<dbReference type="eggNOG" id="KOG0254">
    <property type="taxonomic scope" value="Eukaryota"/>
</dbReference>
<dbReference type="HOGENOM" id="CLU_001265_30_5_1"/>
<dbReference type="InParanoid" id="P87110"/>
<dbReference type="OMA" id="TNAIQYF"/>
<dbReference type="PhylomeDB" id="P87110"/>
<dbReference type="PRO" id="PR:P87110"/>
<dbReference type="Proteomes" id="UP000002485">
    <property type="component" value="Chromosome I"/>
</dbReference>
<dbReference type="GO" id="GO:0005783">
    <property type="term" value="C:endoplasmic reticulum"/>
    <property type="evidence" value="ECO:0007005"/>
    <property type="project" value="PomBase"/>
</dbReference>
<dbReference type="GO" id="GO:0016020">
    <property type="term" value="C:membrane"/>
    <property type="evidence" value="ECO:0000318"/>
    <property type="project" value="GO_Central"/>
</dbReference>
<dbReference type="GO" id="GO:0005886">
    <property type="term" value="C:plasma membrane"/>
    <property type="evidence" value="ECO:0000266"/>
    <property type="project" value="PomBase"/>
</dbReference>
<dbReference type="GO" id="GO:0005366">
    <property type="term" value="F:myo-inositol:proton symporter activity"/>
    <property type="evidence" value="ECO:0000315"/>
    <property type="project" value="PomBase"/>
</dbReference>
<dbReference type="GO" id="GO:1904679">
    <property type="term" value="P:myo-inositol import across plasma membrane"/>
    <property type="evidence" value="ECO:0000315"/>
    <property type="project" value="PomBase"/>
</dbReference>
<dbReference type="CDD" id="cd17360">
    <property type="entry name" value="MFS_HMIT_like"/>
    <property type="match status" value="1"/>
</dbReference>
<dbReference type="FunFam" id="1.20.1250.20:FF:000073">
    <property type="entry name" value="MFS myo-inositol transporter, putative"/>
    <property type="match status" value="1"/>
</dbReference>
<dbReference type="Gene3D" id="1.20.1250.20">
    <property type="entry name" value="MFS general substrate transporter like domains"/>
    <property type="match status" value="1"/>
</dbReference>
<dbReference type="InterPro" id="IPR020846">
    <property type="entry name" value="MFS_dom"/>
</dbReference>
<dbReference type="InterPro" id="IPR005828">
    <property type="entry name" value="MFS_sugar_transport-like"/>
</dbReference>
<dbReference type="InterPro" id="IPR036259">
    <property type="entry name" value="MFS_trans_sf"/>
</dbReference>
<dbReference type="InterPro" id="IPR050814">
    <property type="entry name" value="Myo-inositol_Transporter"/>
</dbReference>
<dbReference type="InterPro" id="IPR003663">
    <property type="entry name" value="Sugar/inositol_transpt"/>
</dbReference>
<dbReference type="InterPro" id="IPR005829">
    <property type="entry name" value="Sugar_transporter_CS"/>
</dbReference>
<dbReference type="NCBIfam" id="TIGR00879">
    <property type="entry name" value="SP"/>
    <property type="match status" value="1"/>
</dbReference>
<dbReference type="PANTHER" id="PTHR48020:SF44">
    <property type="entry name" value="MYO-INOSITOL TRANSPORTER 2"/>
    <property type="match status" value="1"/>
</dbReference>
<dbReference type="PANTHER" id="PTHR48020">
    <property type="entry name" value="PROTON MYO-INOSITOL COTRANSPORTER"/>
    <property type="match status" value="1"/>
</dbReference>
<dbReference type="Pfam" id="PF00083">
    <property type="entry name" value="Sugar_tr"/>
    <property type="match status" value="1"/>
</dbReference>
<dbReference type="PRINTS" id="PR00171">
    <property type="entry name" value="SUGRTRNSPORT"/>
</dbReference>
<dbReference type="SUPFAM" id="SSF103473">
    <property type="entry name" value="MFS general substrate transporter"/>
    <property type="match status" value="1"/>
</dbReference>
<dbReference type="PROSITE" id="PS50850">
    <property type="entry name" value="MFS"/>
    <property type="match status" value="1"/>
</dbReference>
<dbReference type="PROSITE" id="PS00216">
    <property type="entry name" value="SUGAR_TRANSPORT_1"/>
    <property type="match status" value="2"/>
</dbReference>
<accession>P87110</accession>
<accession>P78901</accession>
<proteinExistence type="evidence at transcript level"/>
<name>ITR2_SCHPO</name>
<sequence length="557" mass="61137">MDFNNIPLATIKSSDDKGKDFIVEMTTRPSETKKKVPFSEDMREIPSLPNEEEANATDPQANEVADENGEGFEAEKISSWIWVLSAVAGISGLLFGYDTGVISGALAVLGSDLGHVLSSGQKELITSATSFAALISATTSGWLADWVGRKRLLLCADAIFVIGSVIMAASRNVAMMVVGRFIVGYGIGLTSLIVPMYITELAPARLRGRLVIIYVVFITGGQLIAYSLNAAFEHVHQGWRIMFGIGAAPALGQLISLFWTPESPRYLLRHNHVEKVYKILSRIHPEAKPAEIAYKVSLIQEGVKVDFPEGNKFQHFFHSLKVLFTVPSNRRSLFIGCFLQWFQQFSGTNAIQYFSAIIFQSVGFKNSISVSIVVGATNFVFTIVAFMFIDRIGRRRILLCTSAVMIAGLALCAIAYHFLPADTTQNTNSGWQYVVLASIIIFLASYASGIGNIPWQQAELFPMEVRALGAGFSTAINWVGNLIISASFLTMMESITPTGTFALFAGFCFVGLVTSYFTYPELAGMSIENIHKLLEKGFWQAVKESTKRVRKGRIDEA</sequence>